<dbReference type="EMBL" id="CP000964">
    <property type="protein sequence ID" value="ACI07201.1"/>
    <property type="molecule type" value="Genomic_DNA"/>
</dbReference>
<dbReference type="SMR" id="B5XQH3"/>
<dbReference type="KEGG" id="kpe:KPK_2185"/>
<dbReference type="HOGENOM" id="CLU_124502_1_1_6"/>
<dbReference type="UniPathway" id="UPA00266"/>
<dbReference type="Proteomes" id="UP000001734">
    <property type="component" value="Chromosome"/>
</dbReference>
<dbReference type="GO" id="GO:0005737">
    <property type="term" value="C:cytoplasm"/>
    <property type="evidence" value="ECO:0007669"/>
    <property type="project" value="UniProtKB-SubCell"/>
</dbReference>
<dbReference type="GO" id="GO:0016226">
    <property type="term" value="P:iron-sulfur cluster assembly"/>
    <property type="evidence" value="ECO:0007669"/>
    <property type="project" value="InterPro"/>
</dbReference>
<dbReference type="GO" id="GO:0006790">
    <property type="term" value="P:sulfur compound metabolic process"/>
    <property type="evidence" value="ECO:0007669"/>
    <property type="project" value="InterPro"/>
</dbReference>
<dbReference type="Gene3D" id="3.90.1010.10">
    <property type="match status" value="1"/>
</dbReference>
<dbReference type="HAMAP" id="MF_01832">
    <property type="entry name" value="SufE"/>
    <property type="match status" value="1"/>
</dbReference>
<dbReference type="InterPro" id="IPR023939">
    <property type="entry name" value="Cysteine_desulfuration_SufE"/>
</dbReference>
<dbReference type="InterPro" id="IPR003808">
    <property type="entry name" value="Fe-S_metab-assoc_dom"/>
</dbReference>
<dbReference type="NCBIfam" id="NF006792">
    <property type="entry name" value="PRK09296.1"/>
    <property type="match status" value="1"/>
</dbReference>
<dbReference type="PANTHER" id="PTHR43597:SF3">
    <property type="entry name" value="CYSTEINE DESULFURATION PROTEIN SUFE"/>
    <property type="match status" value="1"/>
</dbReference>
<dbReference type="PANTHER" id="PTHR43597">
    <property type="entry name" value="SULFUR ACCEPTOR PROTEIN CSDE"/>
    <property type="match status" value="1"/>
</dbReference>
<dbReference type="Pfam" id="PF02657">
    <property type="entry name" value="SufE"/>
    <property type="match status" value="1"/>
</dbReference>
<dbReference type="SUPFAM" id="SSF82649">
    <property type="entry name" value="SufE/NifU"/>
    <property type="match status" value="1"/>
</dbReference>
<organism>
    <name type="scientific">Klebsiella pneumoniae (strain 342)</name>
    <dbReference type="NCBI Taxonomy" id="507522"/>
    <lineage>
        <taxon>Bacteria</taxon>
        <taxon>Pseudomonadati</taxon>
        <taxon>Pseudomonadota</taxon>
        <taxon>Gammaproteobacteria</taxon>
        <taxon>Enterobacterales</taxon>
        <taxon>Enterobacteriaceae</taxon>
        <taxon>Klebsiella/Raoultella group</taxon>
        <taxon>Klebsiella</taxon>
        <taxon>Klebsiella pneumoniae complex</taxon>
    </lineage>
</organism>
<accession>B5XQH3</accession>
<evidence type="ECO:0000255" key="1">
    <source>
        <dbReference type="HAMAP-Rule" id="MF_01832"/>
    </source>
</evidence>
<comment type="function">
    <text evidence="1">Participates in cysteine desulfuration mediated by SufS. Cysteine desulfuration mobilizes sulfur from L-cysteine to yield L-alanine and constitutes an essential step in sulfur metabolism for biosynthesis of a variety of sulfur-containing biomolecules. Functions as a sulfur acceptor for SufS, by mediating the direct transfer of the sulfur atom from the S-sulfanylcysteine of SufS, an intermediate product of cysteine desulfuration process.</text>
</comment>
<comment type="pathway">
    <text evidence="1">Cofactor biosynthesis; iron-sulfur cluster biosynthesis.</text>
</comment>
<comment type="subunit">
    <text evidence="1">Homodimer. Interacts with SufS.</text>
</comment>
<comment type="subcellular location">
    <subcellularLocation>
        <location evidence="1">Cytoplasm</location>
    </subcellularLocation>
</comment>
<comment type="similarity">
    <text evidence="1">Belongs to the SufE family.</text>
</comment>
<protein>
    <recommendedName>
        <fullName evidence="1">Cysteine desulfuration protein SufE</fullName>
    </recommendedName>
</protein>
<sequence length="138" mass="15597">MAALPDKDKLLRNFSRCANWEEKYLYIIELGQRLAPLSPEEYSVQNIIQGCQSQVWIVMAQDPSGIITLRGDSDAAIVKGLIAVVFILYDRMTAQDIIEFDVRPWFEKMALTQHLTPSRSQGLEAMIRAIRAKAANIS</sequence>
<keyword id="KW-0963">Cytoplasm</keyword>
<proteinExistence type="inferred from homology"/>
<name>SUFE_KLEP3</name>
<gene>
    <name evidence="1" type="primary">sufE</name>
    <name type="ordered locus">KPK_2185</name>
</gene>
<reference key="1">
    <citation type="journal article" date="2008" name="PLoS Genet.">
        <title>Complete genome sequence of the N2-fixing broad host range endophyte Klebsiella pneumoniae 342 and virulence predictions verified in mice.</title>
        <authorList>
            <person name="Fouts D.E."/>
            <person name="Tyler H.L."/>
            <person name="DeBoy R.T."/>
            <person name="Daugherty S."/>
            <person name="Ren Q."/>
            <person name="Badger J.H."/>
            <person name="Durkin A.S."/>
            <person name="Huot H."/>
            <person name="Shrivastava S."/>
            <person name="Kothari S."/>
            <person name="Dodson R.J."/>
            <person name="Mohamoud Y."/>
            <person name="Khouri H."/>
            <person name="Roesch L.F.W."/>
            <person name="Krogfelt K.A."/>
            <person name="Struve C."/>
            <person name="Triplett E.W."/>
            <person name="Methe B.A."/>
        </authorList>
    </citation>
    <scope>NUCLEOTIDE SEQUENCE [LARGE SCALE GENOMIC DNA]</scope>
    <source>
        <strain>342</strain>
    </source>
</reference>
<feature type="chain" id="PRO_1000188329" description="Cysteine desulfuration protein SufE">
    <location>
        <begin position="1"/>
        <end position="138"/>
    </location>
</feature>
<feature type="active site" description="Cysteine persulfide intermediate" evidence="1">
    <location>
        <position position="51"/>
    </location>
</feature>